<name>DEOD_BACCQ</name>
<proteinExistence type="inferred from homology"/>
<feature type="chain" id="PRO_1000186178" description="Purine nucleoside phosphorylase DeoD-type">
    <location>
        <begin position="1"/>
        <end position="235"/>
    </location>
</feature>
<feature type="active site" description="Proton donor" evidence="2">
    <location>
        <position position="204"/>
    </location>
</feature>
<feature type="binding site" evidence="1">
    <location>
        <position position="4"/>
    </location>
    <ligand>
        <name>a purine D-ribonucleoside</name>
        <dbReference type="ChEBI" id="CHEBI:142355"/>
        <note>ligand shared between dimeric partners</note>
    </ligand>
</feature>
<feature type="binding site" description="in other chain" evidence="1">
    <location>
        <position position="20"/>
    </location>
    <ligand>
        <name>phosphate</name>
        <dbReference type="ChEBI" id="CHEBI:43474"/>
        <note>ligand shared between dimeric partners</note>
    </ligand>
</feature>
<feature type="binding site" description="in other chain" evidence="1">
    <location>
        <position position="24"/>
    </location>
    <ligand>
        <name>phosphate</name>
        <dbReference type="ChEBI" id="CHEBI:43474"/>
        <note>ligand shared between dimeric partners</note>
    </ligand>
</feature>
<feature type="binding site" evidence="1">
    <location>
        <position position="43"/>
    </location>
    <ligand>
        <name>phosphate</name>
        <dbReference type="ChEBI" id="CHEBI:43474"/>
        <note>ligand shared between dimeric partners</note>
    </ligand>
</feature>
<feature type="binding site" description="in other chain" evidence="1">
    <location>
        <begin position="87"/>
        <end position="90"/>
    </location>
    <ligand>
        <name>phosphate</name>
        <dbReference type="ChEBI" id="CHEBI:43474"/>
        <note>ligand shared between dimeric partners</note>
    </ligand>
</feature>
<feature type="binding site" description="in other chain" evidence="1">
    <location>
        <position position="162"/>
    </location>
    <ligand>
        <name>a purine D-ribonucleoside</name>
        <dbReference type="ChEBI" id="CHEBI:142355"/>
        <note>ligand shared between dimeric partners</note>
    </ligand>
</feature>
<feature type="binding site" description="in other chain" evidence="1">
    <location>
        <begin position="179"/>
        <end position="181"/>
    </location>
    <ligand>
        <name>a purine D-ribonucleoside</name>
        <dbReference type="ChEBI" id="CHEBI:142355"/>
        <note>ligand shared between dimeric partners</note>
    </ligand>
</feature>
<feature type="binding site" description="in other chain" evidence="1">
    <location>
        <begin position="203"/>
        <end position="204"/>
    </location>
    <ligand>
        <name>a purine D-ribonucleoside</name>
        <dbReference type="ChEBI" id="CHEBI:142355"/>
        <note>ligand shared between dimeric partners</note>
    </ligand>
</feature>
<feature type="site" description="Important for catalytic activity" evidence="2">
    <location>
        <position position="217"/>
    </location>
</feature>
<comment type="function">
    <text evidence="2">Catalyzes the reversible phosphorolytic breakdown of the N-glycosidic bond in the beta-(deoxy)ribonucleoside molecules, with the formation of the corresponding free purine bases and pentose-1-phosphate.</text>
</comment>
<comment type="catalytic activity">
    <reaction evidence="2">
        <text>a purine D-ribonucleoside + phosphate = a purine nucleobase + alpha-D-ribose 1-phosphate</text>
        <dbReference type="Rhea" id="RHEA:19805"/>
        <dbReference type="ChEBI" id="CHEBI:26386"/>
        <dbReference type="ChEBI" id="CHEBI:43474"/>
        <dbReference type="ChEBI" id="CHEBI:57720"/>
        <dbReference type="ChEBI" id="CHEBI:142355"/>
        <dbReference type="EC" id="2.4.2.1"/>
    </reaction>
</comment>
<comment type="catalytic activity">
    <reaction evidence="2">
        <text>a purine 2'-deoxy-D-ribonucleoside + phosphate = a purine nucleobase + 2-deoxy-alpha-D-ribose 1-phosphate</text>
        <dbReference type="Rhea" id="RHEA:36431"/>
        <dbReference type="ChEBI" id="CHEBI:26386"/>
        <dbReference type="ChEBI" id="CHEBI:43474"/>
        <dbReference type="ChEBI" id="CHEBI:57259"/>
        <dbReference type="ChEBI" id="CHEBI:142361"/>
        <dbReference type="EC" id="2.4.2.1"/>
    </reaction>
</comment>
<comment type="subunit">
    <text evidence="2">Homohexamer; trimer of homodimers.</text>
</comment>
<comment type="similarity">
    <text evidence="2">Belongs to the PNP/UDP phosphorylase family.</text>
</comment>
<evidence type="ECO:0000250" key="1">
    <source>
        <dbReference type="UniProtKB" id="P50389"/>
    </source>
</evidence>
<evidence type="ECO:0000255" key="2">
    <source>
        <dbReference type="HAMAP-Rule" id="MF_01627"/>
    </source>
</evidence>
<accession>B9IVI6</accession>
<keyword id="KW-0328">Glycosyltransferase</keyword>
<keyword id="KW-0808">Transferase</keyword>
<gene>
    <name evidence="2" type="primary">deoD</name>
    <name type="ordered locus">BCQ_1533</name>
</gene>
<dbReference type="EC" id="2.4.2.1" evidence="2"/>
<dbReference type="EMBL" id="CP000227">
    <property type="protein sequence ID" value="ACM11961.1"/>
    <property type="molecule type" value="Genomic_DNA"/>
</dbReference>
<dbReference type="SMR" id="B9IVI6"/>
<dbReference type="KEGG" id="bcq:BCQ_1533"/>
<dbReference type="HOGENOM" id="CLU_068457_2_0_9"/>
<dbReference type="Proteomes" id="UP000000441">
    <property type="component" value="Chromosome"/>
</dbReference>
<dbReference type="GO" id="GO:0005829">
    <property type="term" value="C:cytosol"/>
    <property type="evidence" value="ECO:0007669"/>
    <property type="project" value="TreeGrafter"/>
</dbReference>
<dbReference type="GO" id="GO:0004731">
    <property type="term" value="F:purine-nucleoside phosphorylase activity"/>
    <property type="evidence" value="ECO:0007669"/>
    <property type="project" value="UniProtKB-UniRule"/>
</dbReference>
<dbReference type="GO" id="GO:0006152">
    <property type="term" value="P:purine nucleoside catabolic process"/>
    <property type="evidence" value="ECO:0007669"/>
    <property type="project" value="TreeGrafter"/>
</dbReference>
<dbReference type="CDD" id="cd09006">
    <property type="entry name" value="PNP_EcPNPI-like"/>
    <property type="match status" value="1"/>
</dbReference>
<dbReference type="Gene3D" id="3.40.50.1580">
    <property type="entry name" value="Nucleoside phosphorylase domain"/>
    <property type="match status" value="1"/>
</dbReference>
<dbReference type="HAMAP" id="MF_01627">
    <property type="entry name" value="Pur_nucleosid_phosp"/>
    <property type="match status" value="1"/>
</dbReference>
<dbReference type="InterPro" id="IPR004402">
    <property type="entry name" value="DeoD-type"/>
</dbReference>
<dbReference type="InterPro" id="IPR018016">
    <property type="entry name" value="Nucleoside_phosphorylase_CS"/>
</dbReference>
<dbReference type="InterPro" id="IPR000845">
    <property type="entry name" value="Nucleoside_phosphorylase_d"/>
</dbReference>
<dbReference type="InterPro" id="IPR035994">
    <property type="entry name" value="Nucleoside_phosphorylase_sf"/>
</dbReference>
<dbReference type="NCBIfam" id="TIGR00107">
    <property type="entry name" value="deoD"/>
    <property type="match status" value="1"/>
</dbReference>
<dbReference type="NCBIfam" id="NF004489">
    <property type="entry name" value="PRK05819.1"/>
    <property type="match status" value="1"/>
</dbReference>
<dbReference type="NCBIfam" id="NF009914">
    <property type="entry name" value="PRK13374.1"/>
    <property type="match status" value="1"/>
</dbReference>
<dbReference type="PANTHER" id="PTHR43691:SF11">
    <property type="entry name" value="FI09636P-RELATED"/>
    <property type="match status" value="1"/>
</dbReference>
<dbReference type="PANTHER" id="PTHR43691">
    <property type="entry name" value="URIDINE PHOSPHORYLASE"/>
    <property type="match status" value="1"/>
</dbReference>
<dbReference type="Pfam" id="PF01048">
    <property type="entry name" value="PNP_UDP_1"/>
    <property type="match status" value="1"/>
</dbReference>
<dbReference type="SUPFAM" id="SSF53167">
    <property type="entry name" value="Purine and uridine phosphorylases"/>
    <property type="match status" value="1"/>
</dbReference>
<dbReference type="PROSITE" id="PS01232">
    <property type="entry name" value="PNP_UDP_1"/>
    <property type="match status" value="1"/>
</dbReference>
<reference key="1">
    <citation type="journal article" date="2009" name="J. Bacteriol.">
        <title>Complete genome sequence of the extremophilic Bacillus cereus strain Q1 with industrial applications.</title>
        <authorList>
            <person name="Xiong Z."/>
            <person name="Jiang Y."/>
            <person name="Qi D."/>
            <person name="Lu H."/>
            <person name="Yang F."/>
            <person name="Yang J."/>
            <person name="Chen L."/>
            <person name="Sun L."/>
            <person name="Xu X."/>
            <person name="Xue Y."/>
            <person name="Zhu Y."/>
            <person name="Jin Q."/>
        </authorList>
    </citation>
    <scope>NUCLEOTIDE SEQUENCE [LARGE SCALE GENOMIC DNA]</scope>
    <source>
        <strain>Q1</strain>
    </source>
</reference>
<organism>
    <name type="scientific">Bacillus cereus (strain Q1)</name>
    <dbReference type="NCBI Taxonomy" id="361100"/>
    <lineage>
        <taxon>Bacteria</taxon>
        <taxon>Bacillati</taxon>
        <taxon>Bacillota</taxon>
        <taxon>Bacilli</taxon>
        <taxon>Bacillales</taxon>
        <taxon>Bacillaceae</taxon>
        <taxon>Bacillus</taxon>
        <taxon>Bacillus cereus group</taxon>
    </lineage>
</organism>
<protein>
    <recommendedName>
        <fullName evidence="2">Purine nucleoside phosphorylase DeoD-type</fullName>
        <shortName evidence="2">PNP</shortName>
        <ecNumber evidence="2">2.4.2.1</ecNumber>
    </recommendedName>
</protein>
<sequence>MSVHIEAKQGEIAESILLPGDPLRAKYIAETFLEDVTCYNNVRGMLGFTGTYKGKRVSVQGTGMGVPSISIYVNELIQSYGVKNLIRVGTCGAIQKDVKVRDVIIAMTACTDSNMNRLTFPGFDFAPAANFDLLKKAYDAGTEKGLHVRVGNVLTADVFYRESMDMVKKLGDYGVLAVEMETTALYTLAAKYGVNALSVLTVSDHIFTGEETTSEERQTTFNEMIEIALDAAIQQ</sequence>